<protein>
    <recommendedName>
        <fullName evidence="1">Probable 2-phosphosulfolactate phosphatase</fullName>
        <ecNumber evidence="1">3.1.3.71</ecNumber>
    </recommendedName>
</protein>
<dbReference type="EC" id="3.1.3.71" evidence="1"/>
<dbReference type="EMBL" id="CP000359">
    <property type="protein sequence ID" value="ABF45614.1"/>
    <property type="molecule type" value="Genomic_DNA"/>
</dbReference>
<dbReference type="RefSeq" id="WP_011530451.1">
    <property type="nucleotide sequence ID" value="NC_008025.1"/>
</dbReference>
<dbReference type="SMR" id="Q1IYS0"/>
<dbReference type="STRING" id="319795.Dgeo_1318"/>
<dbReference type="KEGG" id="dge:Dgeo_1318"/>
<dbReference type="eggNOG" id="COG2045">
    <property type="taxonomic scope" value="Bacteria"/>
</dbReference>
<dbReference type="HOGENOM" id="CLU_070028_0_0_0"/>
<dbReference type="Proteomes" id="UP000002431">
    <property type="component" value="Chromosome"/>
</dbReference>
<dbReference type="GO" id="GO:0050532">
    <property type="term" value="F:2-phosphosulfolactate phosphatase activity"/>
    <property type="evidence" value="ECO:0007669"/>
    <property type="project" value="UniProtKB-UniRule"/>
</dbReference>
<dbReference type="GO" id="GO:0000287">
    <property type="term" value="F:magnesium ion binding"/>
    <property type="evidence" value="ECO:0007669"/>
    <property type="project" value="UniProtKB-UniRule"/>
</dbReference>
<dbReference type="GO" id="GO:0050545">
    <property type="term" value="F:sulfopyruvate decarboxylase activity"/>
    <property type="evidence" value="ECO:0007669"/>
    <property type="project" value="TreeGrafter"/>
</dbReference>
<dbReference type="FunFam" id="3.90.1560.10:FF:000001">
    <property type="entry name" value="Probable 2-phosphosulfolactate phosphatase"/>
    <property type="match status" value="1"/>
</dbReference>
<dbReference type="Gene3D" id="3.90.1560.10">
    <property type="entry name" value="ComB-like"/>
    <property type="match status" value="1"/>
</dbReference>
<dbReference type="HAMAP" id="MF_00490">
    <property type="entry name" value="ComB"/>
    <property type="match status" value="1"/>
</dbReference>
<dbReference type="InterPro" id="IPR005238">
    <property type="entry name" value="ComB-like"/>
</dbReference>
<dbReference type="InterPro" id="IPR036702">
    <property type="entry name" value="ComB-like_sf"/>
</dbReference>
<dbReference type="NCBIfam" id="NF010700">
    <property type="entry name" value="PRK14100.1"/>
    <property type="match status" value="1"/>
</dbReference>
<dbReference type="PANTHER" id="PTHR37311">
    <property type="entry name" value="2-PHOSPHOSULFOLACTATE PHOSPHATASE-RELATED"/>
    <property type="match status" value="1"/>
</dbReference>
<dbReference type="PANTHER" id="PTHR37311:SF1">
    <property type="entry name" value="2-PHOSPHOSULFOLACTATE PHOSPHATASE-RELATED"/>
    <property type="match status" value="1"/>
</dbReference>
<dbReference type="Pfam" id="PF04029">
    <property type="entry name" value="2-ph_phosp"/>
    <property type="match status" value="1"/>
</dbReference>
<dbReference type="SUPFAM" id="SSF142823">
    <property type="entry name" value="ComB-like"/>
    <property type="match status" value="1"/>
</dbReference>
<name>COMB_DEIGD</name>
<reference key="1">
    <citation type="submission" date="2006-04" db="EMBL/GenBank/DDBJ databases">
        <title>Complete sequence of chromosome of Deinococcus geothermalis DSM 11300.</title>
        <authorList>
            <person name="Copeland A."/>
            <person name="Lucas S."/>
            <person name="Lapidus A."/>
            <person name="Barry K."/>
            <person name="Detter J.C."/>
            <person name="Glavina del Rio T."/>
            <person name="Hammon N."/>
            <person name="Israni S."/>
            <person name="Dalin E."/>
            <person name="Tice H."/>
            <person name="Pitluck S."/>
            <person name="Brettin T."/>
            <person name="Bruce D."/>
            <person name="Han C."/>
            <person name="Tapia R."/>
            <person name="Saunders E."/>
            <person name="Gilna P."/>
            <person name="Schmutz J."/>
            <person name="Larimer F."/>
            <person name="Land M."/>
            <person name="Hauser L."/>
            <person name="Kyrpides N."/>
            <person name="Kim E."/>
            <person name="Daly M.J."/>
            <person name="Fredrickson J.K."/>
            <person name="Makarova K.S."/>
            <person name="Gaidamakova E.K."/>
            <person name="Zhai M."/>
            <person name="Richardson P."/>
        </authorList>
    </citation>
    <scope>NUCLEOTIDE SEQUENCE [LARGE SCALE GENOMIC DNA]</scope>
    <source>
        <strain>DSM 11300 / CIP 105573 / AG-3a</strain>
    </source>
</reference>
<feature type="chain" id="PRO_1000014465" description="Probable 2-phosphosulfolactate phosphatase">
    <location>
        <begin position="1"/>
        <end position="241"/>
    </location>
</feature>
<comment type="catalytic activity">
    <reaction evidence="1">
        <text>(2R)-O-phospho-3-sulfolactate + H2O = (2R)-3-sulfolactate + phosphate</text>
        <dbReference type="Rhea" id="RHEA:23416"/>
        <dbReference type="ChEBI" id="CHEBI:15377"/>
        <dbReference type="ChEBI" id="CHEBI:15597"/>
        <dbReference type="ChEBI" id="CHEBI:43474"/>
        <dbReference type="ChEBI" id="CHEBI:58738"/>
        <dbReference type="EC" id="3.1.3.71"/>
    </reaction>
</comment>
<comment type="cofactor">
    <cofactor evidence="1">
        <name>Mg(2+)</name>
        <dbReference type="ChEBI" id="CHEBI:18420"/>
    </cofactor>
</comment>
<comment type="similarity">
    <text evidence="1">Belongs to the ComB family.</text>
</comment>
<gene>
    <name evidence="1" type="primary">comB</name>
    <name type="ordered locus">Dgeo_1318</name>
</gene>
<evidence type="ECO:0000255" key="1">
    <source>
        <dbReference type="HAMAP-Rule" id="MF_00490"/>
    </source>
</evidence>
<organism>
    <name type="scientific">Deinococcus geothermalis (strain DSM 11300 / CIP 105573 / AG-3a)</name>
    <dbReference type="NCBI Taxonomy" id="319795"/>
    <lineage>
        <taxon>Bacteria</taxon>
        <taxon>Thermotogati</taxon>
        <taxon>Deinococcota</taxon>
        <taxon>Deinococci</taxon>
        <taxon>Deinococcales</taxon>
        <taxon>Deinococcaceae</taxon>
        <taxon>Deinococcus</taxon>
    </lineage>
</organism>
<accession>Q1IYS0</accession>
<sequence>MRLRVDLLPHGNYPDVVLVVDVLRATTTAVTYLERGADALLLTATPEVALGLRGAAGEGGVLLGGERGGLPIPGFDFGNSPVEAAAQNFTGRVVVMNTTNGTGAAHIAAQTGKHVLLAALTNAHAAARRARALASEEIAIVCAGTDARVGLEDVYAAGVLAEYLLALGEFRIDDGARIALTIRRNAGDPLEALSSSGHGQHLVGLGLGDDVRYAAQVSTSTVVPVLDATQTTPEVLRFVGG</sequence>
<keyword id="KW-0378">Hydrolase</keyword>
<keyword id="KW-0460">Magnesium</keyword>
<proteinExistence type="inferred from homology"/>